<dbReference type="EMBL" id="AE008692">
    <property type="protein sequence ID" value="AAV89850.1"/>
    <property type="molecule type" value="Genomic_DNA"/>
</dbReference>
<dbReference type="RefSeq" id="WP_011241043.1">
    <property type="nucleotide sequence ID" value="NZ_CP035711.1"/>
</dbReference>
<dbReference type="SMR" id="Q5NN60"/>
<dbReference type="STRING" id="264203.ZMO1226"/>
<dbReference type="GeneID" id="79903654"/>
<dbReference type="KEGG" id="zmo:ZMO1226"/>
<dbReference type="eggNOG" id="COG0238">
    <property type="taxonomic scope" value="Bacteria"/>
</dbReference>
<dbReference type="HOGENOM" id="CLU_148710_2_2_5"/>
<dbReference type="Proteomes" id="UP000001173">
    <property type="component" value="Chromosome"/>
</dbReference>
<dbReference type="GO" id="GO:0022627">
    <property type="term" value="C:cytosolic small ribosomal subunit"/>
    <property type="evidence" value="ECO:0007669"/>
    <property type="project" value="TreeGrafter"/>
</dbReference>
<dbReference type="GO" id="GO:0070181">
    <property type="term" value="F:small ribosomal subunit rRNA binding"/>
    <property type="evidence" value="ECO:0007669"/>
    <property type="project" value="TreeGrafter"/>
</dbReference>
<dbReference type="GO" id="GO:0003735">
    <property type="term" value="F:structural constituent of ribosome"/>
    <property type="evidence" value="ECO:0007669"/>
    <property type="project" value="InterPro"/>
</dbReference>
<dbReference type="GO" id="GO:0006412">
    <property type="term" value="P:translation"/>
    <property type="evidence" value="ECO:0007669"/>
    <property type="project" value="UniProtKB-UniRule"/>
</dbReference>
<dbReference type="Gene3D" id="4.10.640.10">
    <property type="entry name" value="Ribosomal protein S18"/>
    <property type="match status" value="1"/>
</dbReference>
<dbReference type="HAMAP" id="MF_00270">
    <property type="entry name" value="Ribosomal_bS18"/>
    <property type="match status" value="1"/>
</dbReference>
<dbReference type="InterPro" id="IPR001648">
    <property type="entry name" value="Ribosomal_bS18"/>
</dbReference>
<dbReference type="InterPro" id="IPR018275">
    <property type="entry name" value="Ribosomal_bS18_CS"/>
</dbReference>
<dbReference type="InterPro" id="IPR036870">
    <property type="entry name" value="Ribosomal_bS18_sf"/>
</dbReference>
<dbReference type="NCBIfam" id="TIGR00165">
    <property type="entry name" value="S18"/>
    <property type="match status" value="1"/>
</dbReference>
<dbReference type="PANTHER" id="PTHR13479">
    <property type="entry name" value="30S RIBOSOMAL PROTEIN S18"/>
    <property type="match status" value="1"/>
</dbReference>
<dbReference type="PANTHER" id="PTHR13479:SF40">
    <property type="entry name" value="SMALL RIBOSOMAL SUBUNIT PROTEIN BS18M"/>
    <property type="match status" value="1"/>
</dbReference>
<dbReference type="Pfam" id="PF01084">
    <property type="entry name" value="Ribosomal_S18"/>
    <property type="match status" value="1"/>
</dbReference>
<dbReference type="PRINTS" id="PR00974">
    <property type="entry name" value="RIBOSOMALS18"/>
</dbReference>
<dbReference type="SUPFAM" id="SSF46911">
    <property type="entry name" value="Ribosomal protein S18"/>
    <property type="match status" value="1"/>
</dbReference>
<dbReference type="PROSITE" id="PS00057">
    <property type="entry name" value="RIBOSOMAL_S18"/>
    <property type="match status" value="1"/>
</dbReference>
<gene>
    <name evidence="1" type="primary">rpsR</name>
    <name type="ordered locus">ZMO1226</name>
</gene>
<reference key="1">
    <citation type="journal article" date="2005" name="Nat. Biotechnol.">
        <title>The genome sequence of the ethanologenic bacterium Zymomonas mobilis ZM4.</title>
        <authorList>
            <person name="Seo J.-S."/>
            <person name="Chong H."/>
            <person name="Park H.S."/>
            <person name="Yoon K.-O."/>
            <person name="Jung C."/>
            <person name="Kim J.J."/>
            <person name="Hong J.H."/>
            <person name="Kim H."/>
            <person name="Kim J.-H."/>
            <person name="Kil J.-I."/>
            <person name="Park C.J."/>
            <person name="Oh H.-M."/>
            <person name="Lee J.-S."/>
            <person name="Jin S.-J."/>
            <person name="Um H.-W."/>
            <person name="Lee H.-J."/>
            <person name="Oh S.-J."/>
            <person name="Kim J.Y."/>
            <person name="Kang H.L."/>
            <person name="Lee S.Y."/>
            <person name="Lee K.J."/>
            <person name="Kang H.S."/>
        </authorList>
    </citation>
    <scope>NUCLEOTIDE SEQUENCE [LARGE SCALE GENOMIC DNA]</scope>
    <source>
        <strain>ATCC 31821 / ZM4 / CP4</strain>
    </source>
</reference>
<protein>
    <recommendedName>
        <fullName evidence="1">Small ribosomal subunit protein bS18</fullName>
    </recommendedName>
    <alternativeName>
        <fullName evidence="2">30S ribosomal protein S18</fullName>
    </alternativeName>
</protein>
<comment type="function">
    <text evidence="1">Binds as a heterodimer with protein bS6 to the central domain of the 16S rRNA, where it helps stabilize the platform of the 30S subunit.</text>
</comment>
<comment type="subunit">
    <text evidence="1">Part of the 30S ribosomal subunit. Forms a tight heterodimer with protein bS6.</text>
</comment>
<comment type="similarity">
    <text evidence="1">Belongs to the bacterial ribosomal protein bS18 family.</text>
</comment>
<sequence length="74" mass="8506">MARPFFRRRKSCPFAAKDAPKIDYKDVRLLQGFVSERGKIVPSRITAVSAKKQRELARAIKRARHIGLLPFIVK</sequence>
<keyword id="KW-1185">Reference proteome</keyword>
<keyword id="KW-0687">Ribonucleoprotein</keyword>
<keyword id="KW-0689">Ribosomal protein</keyword>
<keyword id="KW-0694">RNA-binding</keyword>
<keyword id="KW-0699">rRNA-binding</keyword>
<name>RS18_ZYMMO</name>
<organism>
    <name type="scientific">Zymomonas mobilis subsp. mobilis (strain ATCC 31821 / ZM4 / CP4)</name>
    <dbReference type="NCBI Taxonomy" id="264203"/>
    <lineage>
        <taxon>Bacteria</taxon>
        <taxon>Pseudomonadati</taxon>
        <taxon>Pseudomonadota</taxon>
        <taxon>Alphaproteobacteria</taxon>
        <taxon>Sphingomonadales</taxon>
        <taxon>Zymomonadaceae</taxon>
        <taxon>Zymomonas</taxon>
    </lineage>
</organism>
<feature type="chain" id="PRO_0000345562" description="Small ribosomal subunit protein bS18">
    <location>
        <begin position="1"/>
        <end position="74"/>
    </location>
</feature>
<evidence type="ECO:0000255" key="1">
    <source>
        <dbReference type="HAMAP-Rule" id="MF_00270"/>
    </source>
</evidence>
<evidence type="ECO:0000305" key="2"/>
<proteinExistence type="inferred from homology"/>
<accession>Q5NN60</accession>